<comment type="function">
    <text evidence="1">Catalyzes the attachment of L-aspartate to tRNA(Asp) in a two-step reaction: L-aspartate is first activated by ATP to form Asp-AMP and then transferred to the acceptor end of tRNA(Asp).</text>
</comment>
<comment type="catalytic activity">
    <reaction evidence="1">
        <text>tRNA(Asp) + L-aspartate + ATP = L-aspartyl-tRNA(Asp) + AMP + diphosphate</text>
        <dbReference type="Rhea" id="RHEA:19649"/>
        <dbReference type="Rhea" id="RHEA-COMP:9660"/>
        <dbReference type="Rhea" id="RHEA-COMP:9678"/>
        <dbReference type="ChEBI" id="CHEBI:29991"/>
        <dbReference type="ChEBI" id="CHEBI:30616"/>
        <dbReference type="ChEBI" id="CHEBI:33019"/>
        <dbReference type="ChEBI" id="CHEBI:78442"/>
        <dbReference type="ChEBI" id="CHEBI:78516"/>
        <dbReference type="ChEBI" id="CHEBI:456215"/>
        <dbReference type="EC" id="6.1.1.12"/>
    </reaction>
</comment>
<comment type="subunit">
    <text evidence="1">Homodimer.</text>
</comment>
<comment type="subcellular location">
    <subcellularLocation>
        <location evidence="1">Cytoplasm</location>
    </subcellularLocation>
</comment>
<comment type="similarity">
    <text evidence="1">Belongs to the class-II aminoacyl-tRNA synthetase family. Type 1 subfamily.</text>
</comment>
<evidence type="ECO:0000255" key="1">
    <source>
        <dbReference type="HAMAP-Rule" id="MF_00044"/>
    </source>
</evidence>
<dbReference type="EC" id="6.1.1.12" evidence="1"/>
<dbReference type="EMBL" id="AJ938182">
    <property type="protein sequence ID" value="CAI81188.1"/>
    <property type="molecule type" value="Genomic_DNA"/>
</dbReference>
<dbReference type="RefSeq" id="WP_000044799.1">
    <property type="nucleotide sequence ID" value="NC_007622.1"/>
</dbReference>
<dbReference type="SMR" id="Q2YT75"/>
<dbReference type="KEGG" id="sab:SAB1499c"/>
<dbReference type="HOGENOM" id="CLU_014330_3_2_9"/>
<dbReference type="GO" id="GO:0005737">
    <property type="term" value="C:cytoplasm"/>
    <property type="evidence" value="ECO:0007669"/>
    <property type="project" value="UniProtKB-SubCell"/>
</dbReference>
<dbReference type="GO" id="GO:0004815">
    <property type="term" value="F:aspartate-tRNA ligase activity"/>
    <property type="evidence" value="ECO:0007669"/>
    <property type="project" value="UniProtKB-UniRule"/>
</dbReference>
<dbReference type="GO" id="GO:0005524">
    <property type="term" value="F:ATP binding"/>
    <property type="evidence" value="ECO:0007669"/>
    <property type="project" value="UniProtKB-UniRule"/>
</dbReference>
<dbReference type="GO" id="GO:0140096">
    <property type="term" value="F:catalytic activity, acting on a protein"/>
    <property type="evidence" value="ECO:0007669"/>
    <property type="project" value="UniProtKB-ARBA"/>
</dbReference>
<dbReference type="GO" id="GO:0003676">
    <property type="term" value="F:nucleic acid binding"/>
    <property type="evidence" value="ECO:0007669"/>
    <property type="project" value="InterPro"/>
</dbReference>
<dbReference type="GO" id="GO:0016740">
    <property type="term" value="F:transferase activity"/>
    <property type="evidence" value="ECO:0007669"/>
    <property type="project" value="UniProtKB-ARBA"/>
</dbReference>
<dbReference type="GO" id="GO:0006422">
    <property type="term" value="P:aspartyl-tRNA aminoacylation"/>
    <property type="evidence" value="ECO:0007669"/>
    <property type="project" value="UniProtKB-UniRule"/>
</dbReference>
<dbReference type="CDD" id="cd00777">
    <property type="entry name" value="AspRS_core"/>
    <property type="match status" value="1"/>
</dbReference>
<dbReference type="CDD" id="cd04317">
    <property type="entry name" value="EcAspRS_like_N"/>
    <property type="match status" value="1"/>
</dbReference>
<dbReference type="Gene3D" id="3.30.930.10">
    <property type="entry name" value="Bira Bifunctional Protein, Domain 2"/>
    <property type="match status" value="1"/>
</dbReference>
<dbReference type="Gene3D" id="3.30.1360.30">
    <property type="entry name" value="GAD-like domain"/>
    <property type="match status" value="1"/>
</dbReference>
<dbReference type="Gene3D" id="2.40.50.140">
    <property type="entry name" value="Nucleic acid-binding proteins"/>
    <property type="match status" value="1"/>
</dbReference>
<dbReference type="HAMAP" id="MF_00044">
    <property type="entry name" value="Asp_tRNA_synth_type1"/>
    <property type="match status" value="1"/>
</dbReference>
<dbReference type="InterPro" id="IPR004364">
    <property type="entry name" value="Aa-tRNA-synt_II"/>
</dbReference>
<dbReference type="InterPro" id="IPR006195">
    <property type="entry name" value="aa-tRNA-synth_II"/>
</dbReference>
<dbReference type="InterPro" id="IPR045864">
    <property type="entry name" value="aa-tRNA-synth_II/BPL/LPL"/>
</dbReference>
<dbReference type="InterPro" id="IPR004524">
    <property type="entry name" value="Asp-tRNA-ligase_1"/>
</dbReference>
<dbReference type="InterPro" id="IPR047089">
    <property type="entry name" value="Asp-tRNA-ligase_1_N"/>
</dbReference>
<dbReference type="InterPro" id="IPR002312">
    <property type="entry name" value="Asp/Asn-tRNA-synth_IIb"/>
</dbReference>
<dbReference type="InterPro" id="IPR047090">
    <property type="entry name" value="AspRS_core"/>
</dbReference>
<dbReference type="InterPro" id="IPR004115">
    <property type="entry name" value="GAD-like_sf"/>
</dbReference>
<dbReference type="InterPro" id="IPR029351">
    <property type="entry name" value="GAD_dom"/>
</dbReference>
<dbReference type="InterPro" id="IPR012340">
    <property type="entry name" value="NA-bd_OB-fold"/>
</dbReference>
<dbReference type="InterPro" id="IPR004365">
    <property type="entry name" value="NA-bd_OB_tRNA"/>
</dbReference>
<dbReference type="NCBIfam" id="TIGR00459">
    <property type="entry name" value="aspS_bact"/>
    <property type="match status" value="1"/>
</dbReference>
<dbReference type="NCBIfam" id="NF001750">
    <property type="entry name" value="PRK00476.1"/>
    <property type="match status" value="1"/>
</dbReference>
<dbReference type="PANTHER" id="PTHR22594:SF5">
    <property type="entry name" value="ASPARTATE--TRNA LIGASE, MITOCHONDRIAL"/>
    <property type="match status" value="1"/>
</dbReference>
<dbReference type="PANTHER" id="PTHR22594">
    <property type="entry name" value="ASPARTYL/LYSYL-TRNA SYNTHETASE"/>
    <property type="match status" value="1"/>
</dbReference>
<dbReference type="Pfam" id="PF02938">
    <property type="entry name" value="GAD"/>
    <property type="match status" value="1"/>
</dbReference>
<dbReference type="Pfam" id="PF00152">
    <property type="entry name" value="tRNA-synt_2"/>
    <property type="match status" value="1"/>
</dbReference>
<dbReference type="Pfam" id="PF01336">
    <property type="entry name" value="tRNA_anti-codon"/>
    <property type="match status" value="1"/>
</dbReference>
<dbReference type="PRINTS" id="PR01042">
    <property type="entry name" value="TRNASYNTHASP"/>
</dbReference>
<dbReference type="SUPFAM" id="SSF55681">
    <property type="entry name" value="Class II aaRS and biotin synthetases"/>
    <property type="match status" value="1"/>
</dbReference>
<dbReference type="SUPFAM" id="SSF55261">
    <property type="entry name" value="GAD domain-like"/>
    <property type="match status" value="1"/>
</dbReference>
<dbReference type="SUPFAM" id="SSF50249">
    <property type="entry name" value="Nucleic acid-binding proteins"/>
    <property type="match status" value="1"/>
</dbReference>
<dbReference type="PROSITE" id="PS50862">
    <property type="entry name" value="AA_TRNA_LIGASE_II"/>
    <property type="match status" value="1"/>
</dbReference>
<gene>
    <name evidence="1" type="primary">aspS</name>
    <name type="ordered locus">SAB1499c</name>
</gene>
<organism>
    <name type="scientific">Staphylococcus aureus (strain bovine RF122 / ET3-1)</name>
    <dbReference type="NCBI Taxonomy" id="273036"/>
    <lineage>
        <taxon>Bacteria</taxon>
        <taxon>Bacillati</taxon>
        <taxon>Bacillota</taxon>
        <taxon>Bacilli</taxon>
        <taxon>Bacillales</taxon>
        <taxon>Staphylococcaceae</taxon>
        <taxon>Staphylococcus</taxon>
    </lineage>
</organism>
<accession>Q2YT75</accession>
<keyword id="KW-0030">Aminoacyl-tRNA synthetase</keyword>
<keyword id="KW-0067">ATP-binding</keyword>
<keyword id="KW-0963">Cytoplasm</keyword>
<keyword id="KW-0436">Ligase</keyword>
<keyword id="KW-0547">Nucleotide-binding</keyword>
<keyword id="KW-0648">Protein biosynthesis</keyword>
<reference key="1">
    <citation type="journal article" date="2007" name="PLoS ONE">
        <title>Molecular correlates of host specialization in Staphylococcus aureus.</title>
        <authorList>
            <person name="Herron-Olson L."/>
            <person name="Fitzgerald J.R."/>
            <person name="Musser J.M."/>
            <person name="Kapur V."/>
        </authorList>
    </citation>
    <scope>NUCLEOTIDE SEQUENCE [LARGE SCALE GENOMIC DNA]</scope>
    <source>
        <strain>bovine RF122 / ET3-1</strain>
    </source>
</reference>
<sequence length="588" mass="66599">MSKRTTYCGLVTEAFLGQEITLKGWVNNRRDLGGLIFVDLRDREGIVQVVFNPAFSEEALKIAETVRSEYVVEVQGTVTKRDPETVNPKIKTGQVEVQVTNIKVINKSETPPFSINEENVNVDENIRLKYRYLDLRRQELAQTFKMRHQITRSIRQYLDDEGFFDIETPVLTKSTPEGARDYLVPSRVHDGEFYALPQSPQLFKQLLMISGFDKYYQIVKCFRDEDLRADRQPEFTQVDIEMSFVDQEDVMQMGEEMLKKVVKEVKGVEINGAFPRMTYKEAMRRYGSDKPDTRFEMELIDVSQLGRDMDFKVFKDTVENDGEIKAIVAKGAAEQYTRKDMDALTEFVNIYGAKGLAWVKVVEDGLTGPIGRFFETENVETLLTLTGAEAGDLVMFVADKPNVVAQSLGALRVKLAKELGLIDETKLNFLWVTDWPLLEYDEDAKRYVAAHHPFTSPKEADIAKLGTAPEEAEANAYDIVLNGYELGGGSIRIHDGELQEKMFEVLGFTKEQAQEQFGFLLDAFKYGAPPHGGIALGLDRLVMLLTNRTNLRDTIAFPKTASATCLLTNAPGEVSDKQLEELSLRIRH</sequence>
<name>SYD_STAAB</name>
<proteinExistence type="inferred from homology"/>
<protein>
    <recommendedName>
        <fullName evidence="1">Aspartate--tRNA ligase</fullName>
        <ecNumber evidence="1">6.1.1.12</ecNumber>
    </recommendedName>
    <alternativeName>
        <fullName evidence="1">Aspartyl-tRNA synthetase</fullName>
        <shortName evidence="1">AspRS</shortName>
    </alternativeName>
</protein>
<feature type="chain" id="PRO_0000235560" description="Aspartate--tRNA ligase">
    <location>
        <begin position="1"/>
        <end position="588"/>
    </location>
</feature>
<feature type="region of interest" description="Aspartate" evidence="1">
    <location>
        <begin position="201"/>
        <end position="204"/>
    </location>
</feature>
<feature type="binding site" evidence="1">
    <location>
        <position position="177"/>
    </location>
    <ligand>
        <name>L-aspartate</name>
        <dbReference type="ChEBI" id="CHEBI:29991"/>
    </ligand>
</feature>
<feature type="binding site" evidence="1">
    <location>
        <begin position="223"/>
        <end position="225"/>
    </location>
    <ligand>
        <name>ATP</name>
        <dbReference type="ChEBI" id="CHEBI:30616"/>
    </ligand>
</feature>
<feature type="binding site" evidence="1">
    <location>
        <position position="223"/>
    </location>
    <ligand>
        <name>L-aspartate</name>
        <dbReference type="ChEBI" id="CHEBI:29991"/>
    </ligand>
</feature>
<feature type="binding site" evidence="1">
    <location>
        <position position="232"/>
    </location>
    <ligand>
        <name>ATP</name>
        <dbReference type="ChEBI" id="CHEBI:30616"/>
    </ligand>
</feature>
<feature type="binding site" evidence="1">
    <location>
        <position position="451"/>
    </location>
    <ligand>
        <name>L-aspartate</name>
        <dbReference type="ChEBI" id="CHEBI:29991"/>
    </ligand>
</feature>
<feature type="binding site" evidence="1">
    <location>
        <position position="485"/>
    </location>
    <ligand>
        <name>ATP</name>
        <dbReference type="ChEBI" id="CHEBI:30616"/>
    </ligand>
</feature>
<feature type="binding site" evidence="1">
    <location>
        <position position="492"/>
    </location>
    <ligand>
        <name>L-aspartate</name>
        <dbReference type="ChEBI" id="CHEBI:29991"/>
    </ligand>
</feature>
<feature type="binding site" evidence="1">
    <location>
        <begin position="537"/>
        <end position="540"/>
    </location>
    <ligand>
        <name>ATP</name>
        <dbReference type="ChEBI" id="CHEBI:30616"/>
    </ligand>
</feature>